<sequence length="721" mass="81421">MAPSYDQPYSVLLDRNIYDPDNLCEGIDLRRHHAADLEDVGAFRCQEDWRRLVGPLERPFRGGLGPQFSFITVAVPNCIPERMEITSYALEFGFIHDDVIDEHIEDADLSDMEEGLEQGAKTGSIDERGASGKRVIAAQIMREMMAIDPERAMVVAKSWAAGVQHSARREELTNFQTLDEYIPYRSLDVGYMLWHGLVTFGCAITIPPEEEALCTEFLTPALCAASLVNDLFSFEKEKNDANIQNAVYIVMKEHGCDEAEGRERLKARIRQEMAKFVQIVKDTKTRSDLSDDTKRYIDVMQYTLSGNVVWSAQCPRYNLKAEWNELQMLRAKHGVAKYPATFPPADGSMDHIWKKGSTQGESKGEKRKRQSVNGTNGVNGTNGVKKPTISRVGVDSLQLNEVVSLALSTDLPNLTTDVVLQPYAYITSMPSKGFRDQAVDSINNWLKTPAKATKKIKEIINMLHTASLMLDDLEDNSPLRRGKPSTHNVYGASQTINSATYQFTHATALAAGLSNPDCLRIFNEEINELYVGQSYDLYWTHNIICPTFGEYLRMVDMKTGGLFRMLTRLMTAESPLNGQISDSELNPLGCLIGRFFQIRDDYQNLVSAEYAQQKGFAEDLDEGKYSFTLIHCIRTLEANPSLAGEQMQLRALLMKRRVEGKLTNEAKREILDTMKKTQSLEYTLEVLRELHTKLDNEVGRLEKKFGDDNFALRLMMEMLKV</sequence>
<proteinExistence type="evidence at protein level"/>
<comment type="function">
    <text evidence="1 6 9">Bifunctional sesterterpene synthase; part of the gene cluster that mediates the biosynthesis of the sesterterpenes ophiobolins, fungal phytotoxins with potential anti-cancer activities (PubMed:27116000). The first step of the pathway is performed by the sesterterpene synthase oblA that possesses both prenyl transferase and terpene cyclase activity, converting isopentenyl diphosphate and dimethylallyl diphosphate into geranylfarnesyl diphosphate (GFPP) and further converting GFPP into ophiobolin F, respectively (By similarity). Other sesterterpenoids (C(25) terpenoids) are found as minor products of oblA (By similarity). The cytochrome P450 monooxygenase oblB then catalyzes a four-step oxidative transformation of ophiobolin F to yield ophiobolin C (PubMed:27116000). The FAD-dependent oxidoreductase oblC might be involved in a later oxidation step that produces ophiobolin A (Probable).</text>
</comment>
<comment type="catalytic activity">
    <reaction evidence="6">
        <text>isopentenyl diphosphate + (2E,6E)-farnesyl diphosphate = (2E,6E,10E)-geranylgeranyl diphosphate + diphosphate</text>
        <dbReference type="Rhea" id="RHEA:17653"/>
        <dbReference type="ChEBI" id="CHEBI:33019"/>
        <dbReference type="ChEBI" id="CHEBI:58756"/>
        <dbReference type="ChEBI" id="CHEBI:128769"/>
        <dbReference type="ChEBI" id="CHEBI:175763"/>
        <dbReference type="EC" id="2.5.1.29"/>
    </reaction>
    <physiologicalReaction direction="left-to-right" evidence="6">
        <dbReference type="Rhea" id="RHEA:17654"/>
    </physiologicalReaction>
</comment>
<comment type="catalytic activity">
    <reaction evidence="6">
        <text>isopentenyl diphosphate + (2E,6E,10E)-geranylgeranyl diphosphate = (2E,6E,10E,14E)-geranylfarnesyl diphosphate + diphosphate</text>
        <dbReference type="Rhea" id="RHEA:25694"/>
        <dbReference type="ChEBI" id="CHEBI:33019"/>
        <dbReference type="ChEBI" id="CHEBI:57907"/>
        <dbReference type="ChEBI" id="CHEBI:58756"/>
        <dbReference type="ChEBI" id="CHEBI:128769"/>
        <dbReference type="EC" id="2.5.1.81"/>
    </reaction>
    <physiologicalReaction direction="left-to-right" evidence="6">
        <dbReference type="Rhea" id="RHEA:25695"/>
    </physiologicalReaction>
</comment>
<comment type="catalytic activity">
    <reaction evidence="6">
        <text>(2E,6E,10E,14E)-geranylfarnesyl diphosphate + H2O = ophiobolin F + diphosphate</text>
        <dbReference type="Rhea" id="RHEA:41552"/>
        <dbReference type="ChEBI" id="CHEBI:15377"/>
        <dbReference type="ChEBI" id="CHEBI:33019"/>
        <dbReference type="ChEBI" id="CHEBI:57907"/>
        <dbReference type="ChEBI" id="CHEBI:78293"/>
        <dbReference type="EC" id="4.2.3.145"/>
    </reaction>
    <physiologicalReaction direction="left-to-right" evidence="6">
        <dbReference type="Rhea" id="RHEA:41553"/>
    </physiologicalReaction>
</comment>
<comment type="cofactor">
    <cofactor evidence="3 4">
        <name>Mg(2+)</name>
        <dbReference type="ChEBI" id="CHEBI:18420"/>
    </cofactor>
    <text evidence="3 4">Binds 4 Mg(2+) ions per subunit.</text>
</comment>
<comment type="pathway">
    <text evidence="9">Secondary metabolite biosynthesis; terpenoid biosynthesis.</text>
</comment>
<comment type="domain">
    <text evidence="1">The conserved DDXXD motifs as well as the NSE/DTE motif are important for the catalytic activity, presumably through binding to Mg(2+).</text>
</comment>
<comment type="similarity">
    <text evidence="8">In the N-terminal section; belongs to the terpene synthase family.</text>
</comment>
<comment type="similarity">
    <text evidence="8">In the C-terminal section; belongs to the FPP/GGPP synthase family.</text>
</comment>
<name>OBLA_COCH5</name>
<keyword id="KW-0414">Isoprene biosynthesis</keyword>
<keyword id="KW-0456">Lyase</keyword>
<keyword id="KW-0460">Magnesium</keyword>
<keyword id="KW-0479">Metal-binding</keyword>
<keyword id="KW-0511">Multifunctional enzyme</keyword>
<keyword id="KW-1185">Reference proteome</keyword>
<keyword id="KW-0808">Transferase</keyword>
<organism>
    <name type="scientific">Cochliobolus heterostrophus (strain C5 / ATCC 48332 / race O)</name>
    <name type="common">Southern corn leaf blight fungus</name>
    <name type="synonym">Bipolaris maydis</name>
    <dbReference type="NCBI Taxonomy" id="701091"/>
    <lineage>
        <taxon>Eukaryota</taxon>
        <taxon>Fungi</taxon>
        <taxon>Dikarya</taxon>
        <taxon>Ascomycota</taxon>
        <taxon>Pezizomycotina</taxon>
        <taxon>Dothideomycetes</taxon>
        <taxon>Pleosporomycetidae</taxon>
        <taxon>Pleosporales</taxon>
        <taxon>Pleosporineae</taxon>
        <taxon>Pleosporaceae</taxon>
        <taxon>Bipolaris</taxon>
    </lineage>
</organism>
<reference key="1">
    <citation type="journal article" date="2012" name="PLoS Pathog.">
        <title>Diverse lifestyles and strategies of plant pathogenesis encoded in the genomes of eighteen Dothideomycetes fungi.</title>
        <authorList>
            <person name="Ohm R.A."/>
            <person name="Feau N."/>
            <person name="Henrissat B."/>
            <person name="Schoch C.L."/>
            <person name="Horwitz B.A."/>
            <person name="Barry K.W."/>
            <person name="Condon B.J."/>
            <person name="Copeland A.C."/>
            <person name="Dhillon B."/>
            <person name="Glaser F."/>
            <person name="Hesse C.N."/>
            <person name="Kosti I."/>
            <person name="LaButti K."/>
            <person name="Lindquist E.A."/>
            <person name="Lucas S."/>
            <person name="Salamov A.A."/>
            <person name="Bradshaw R.E."/>
            <person name="Ciuffetti L."/>
            <person name="Hamelin R.C."/>
            <person name="Kema G.H.J."/>
            <person name="Lawrence C."/>
            <person name="Scott J.A."/>
            <person name="Spatafora J.W."/>
            <person name="Turgeon B.G."/>
            <person name="de Wit P.J.G.M."/>
            <person name="Zhong S."/>
            <person name="Goodwin S.B."/>
            <person name="Grigoriev I.V."/>
        </authorList>
    </citation>
    <scope>NUCLEOTIDE SEQUENCE [LARGE SCALE GENOMIC DNA]</scope>
    <source>
        <strain>C5 / ATCC 48332 / race O</strain>
    </source>
</reference>
<reference key="2">
    <citation type="journal article" date="2013" name="PLoS Genet.">
        <title>Comparative genome structure, secondary metabolite, and effector coding capacity across Cochliobolus pathogens.</title>
        <authorList>
            <person name="Condon B.J."/>
            <person name="Leng Y."/>
            <person name="Wu D."/>
            <person name="Bushley K.E."/>
            <person name="Ohm R.A."/>
            <person name="Otillar R."/>
            <person name="Martin J."/>
            <person name="Schackwitz W."/>
            <person name="Grimwood J."/>
            <person name="MohdZainudin N."/>
            <person name="Xue C."/>
            <person name="Wang R."/>
            <person name="Manning V.A."/>
            <person name="Dhillon B."/>
            <person name="Tu Z.J."/>
            <person name="Steffenson B.J."/>
            <person name="Salamov A."/>
            <person name="Sun H."/>
            <person name="Lowry S."/>
            <person name="LaButti K."/>
            <person name="Han J."/>
            <person name="Copeland A."/>
            <person name="Lindquist E."/>
            <person name="Barry K."/>
            <person name="Schmutz J."/>
            <person name="Baker S.E."/>
            <person name="Ciuffetti L.M."/>
            <person name="Grigoriev I.V."/>
            <person name="Zhong S."/>
            <person name="Turgeon B.G."/>
        </authorList>
    </citation>
    <scope>NUCLEOTIDE SEQUENCE [LARGE SCALE GENOMIC DNA]</scope>
    <source>
        <strain>C5 / ATCC 48332 / race O</strain>
    </source>
</reference>
<reference key="3">
    <citation type="journal article" date="2016" name="Org. Lett.">
        <title>Multiple oxidative modifications in the ophiobolin biosynthesis: P450 oxidations found in genome mining.</title>
        <authorList>
            <person name="Narita K."/>
            <person name="Chiba R."/>
            <person name="Minami A."/>
            <person name="Kodama M."/>
            <person name="Fujii I."/>
            <person name="Gomi K."/>
            <person name="Oikawa H."/>
        </authorList>
    </citation>
    <scope>FUNCTION</scope>
    <scope>CATALYTIC ACTIVITY</scope>
    <scope>PATHWAY</scope>
</reference>
<accession>M2V8C1</accession>
<protein>
    <recommendedName>
        <fullName evidence="7">Ophiobolin F synthase oblA</fullName>
    </recommendedName>
    <alternativeName>
        <fullName evidence="7">Bifunctional sesterterpene synthase oblA</fullName>
    </alternativeName>
    <alternativeName>
        <fullName evidence="7">Ophiobolin biosynthesis cluster protein A</fullName>
    </alternativeName>
    <domain>
        <recommendedName>
            <fullName evidence="7">Ophiobolin F cyclase</fullName>
            <ecNumber evidence="6">4.2.3.145</ecNumber>
        </recommendedName>
    </domain>
    <domain>
        <recommendedName>
            <fullName evidence="7">Geranylgeranyl diphosphate synthase</fullName>
            <shortName evidence="7">GGDP synthase</shortName>
            <shortName evidence="7">GGS</shortName>
            <ecNumber evidence="6">2.5.1.29</ecNumber>
        </recommendedName>
    </domain>
    <domain>
        <recommendedName>
            <fullName evidence="7">Geranylfarnesyl diphosphate synthase</fullName>
            <shortName evidence="7">GFDP synthase</shortName>
            <ecNumber evidence="6">2.5.1.81</ecNumber>
        </recommendedName>
    </domain>
</protein>
<feature type="chain" id="PRO_0000451167" description="Ophiobolin F synthase oblA">
    <location>
        <begin position="1"/>
        <end position="721"/>
    </location>
</feature>
<feature type="region of interest" description="(7Z)-ophiobola-7,19-dien-3-ol synthase" evidence="1">
    <location>
        <begin position="5"/>
        <end position="325"/>
    </location>
</feature>
<feature type="region of interest" description="Geranylfarnesyl diphosphate synthase" evidence="1">
    <location>
        <begin position="326"/>
        <end position="721"/>
    </location>
</feature>
<feature type="region of interest" description="Disordered" evidence="5">
    <location>
        <begin position="348"/>
        <end position="387"/>
    </location>
</feature>
<feature type="short sequence motif" description="DDXXD 1" evidence="1">
    <location>
        <begin position="97"/>
        <end position="101"/>
    </location>
</feature>
<feature type="short sequence motif" description="NSE/DTE" evidence="1">
    <location>
        <begin position="229"/>
        <end position="237"/>
    </location>
</feature>
<feature type="short sequence motif" description="DDXXD 2" evidence="1">
    <location>
        <begin position="471"/>
        <end position="475"/>
    </location>
</feature>
<feature type="compositionally biased region" description="Low complexity" evidence="5">
    <location>
        <begin position="372"/>
        <end position="384"/>
    </location>
</feature>
<feature type="binding site" evidence="4">
    <location>
        <position position="97"/>
    </location>
    <ligand>
        <name>Mg(2+)</name>
        <dbReference type="ChEBI" id="CHEBI:18420"/>
        <label>1</label>
    </ligand>
</feature>
<feature type="binding site" evidence="4">
    <location>
        <position position="97"/>
    </location>
    <ligand>
        <name>Mg(2+)</name>
        <dbReference type="ChEBI" id="CHEBI:18420"/>
        <label>2</label>
    </ligand>
</feature>
<feature type="binding site" evidence="2">
    <location>
        <position position="97"/>
    </location>
    <ligand>
        <name>substrate</name>
    </ligand>
</feature>
<feature type="binding site" evidence="4">
    <location>
        <position position="101"/>
    </location>
    <ligand>
        <name>Mg(2+)</name>
        <dbReference type="ChEBI" id="CHEBI:18420"/>
        <label>1</label>
    </ligand>
</feature>
<feature type="binding site" evidence="4">
    <location>
        <position position="101"/>
    </location>
    <ligand>
        <name>Mg(2+)</name>
        <dbReference type="ChEBI" id="CHEBI:18420"/>
        <label>2</label>
    </ligand>
</feature>
<feature type="binding site" evidence="2">
    <location>
        <begin position="185"/>
        <end position="188"/>
    </location>
    <ligand>
        <name>substrate</name>
    </ligand>
</feature>
<feature type="binding site" evidence="2">
    <location>
        <position position="229"/>
    </location>
    <ligand>
        <name>substrate</name>
    </ligand>
</feature>
<feature type="binding site" evidence="2">
    <location>
        <begin position="233"/>
        <end position="237"/>
    </location>
    <ligand>
        <name>substrate</name>
    </ligand>
</feature>
<feature type="binding site" evidence="2">
    <location>
        <begin position="316"/>
        <end position="317"/>
    </location>
    <ligand>
        <name>substrate</name>
    </ligand>
</feature>
<feature type="binding site" evidence="3">
    <location>
        <position position="432"/>
    </location>
    <ligand>
        <name>isopentenyl diphosphate</name>
        <dbReference type="ChEBI" id="CHEBI:128769"/>
    </ligand>
</feature>
<feature type="binding site" evidence="3">
    <location>
        <position position="435"/>
    </location>
    <ligand>
        <name>isopentenyl diphosphate</name>
        <dbReference type="ChEBI" id="CHEBI:128769"/>
    </ligand>
</feature>
<feature type="binding site" evidence="3">
    <location>
        <position position="464"/>
    </location>
    <ligand>
        <name>isopentenyl diphosphate</name>
        <dbReference type="ChEBI" id="CHEBI:128769"/>
    </ligand>
</feature>
<feature type="binding site" evidence="3">
    <location>
        <position position="471"/>
    </location>
    <ligand>
        <name>Mg(2+)</name>
        <dbReference type="ChEBI" id="CHEBI:18420"/>
        <label>3</label>
    </ligand>
</feature>
<feature type="binding site" evidence="3">
    <location>
        <position position="471"/>
    </location>
    <ligand>
        <name>Mg(2+)</name>
        <dbReference type="ChEBI" id="CHEBI:18420"/>
        <label>4</label>
    </ligand>
</feature>
<feature type="binding site" evidence="3">
    <location>
        <position position="475"/>
    </location>
    <ligand>
        <name>Mg(2+)</name>
        <dbReference type="ChEBI" id="CHEBI:18420"/>
        <label>3</label>
    </ligand>
</feature>
<feature type="binding site" evidence="3">
    <location>
        <position position="475"/>
    </location>
    <ligand>
        <name>Mg(2+)</name>
        <dbReference type="ChEBI" id="CHEBI:18420"/>
        <label>4</label>
    </ligand>
</feature>
<feature type="binding site" evidence="3">
    <location>
        <position position="480"/>
    </location>
    <ligand>
        <name>dimethylallyl diphosphate</name>
        <dbReference type="ChEBI" id="CHEBI:57623"/>
    </ligand>
</feature>
<feature type="binding site" evidence="3">
    <location>
        <position position="481"/>
    </location>
    <ligand>
        <name>isopentenyl diphosphate</name>
        <dbReference type="ChEBI" id="CHEBI:128769"/>
    </ligand>
</feature>
<feature type="binding site" evidence="3">
    <location>
        <position position="558"/>
    </location>
    <ligand>
        <name>dimethylallyl diphosphate</name>
        <dbReference type="ChEBI" id="CHEBI:57623"/>
    </ligand>
</feature>
<feature type="binding site" evidence="3">
    <location>
        <position position="559"/>
    </location>
    <ligand>
        <name>dimethylallyl diphosphate</name>
        <dbReference type="ChEBI" id="CHEBI:57623"/>
    </ligand>
</feature>
<feature type="binding site" evidence="3">
    <location>
        <position position="597"/>
    </location>
    <ligand>
        <name>dimethylallyl diphosphate</name>
        <dbReference type="ChEBI" id="CHEBI:57623"/>
    </ligand>
</feature>
<feature type="binding site" evidence="3">
    <location>
        <position position="604"/>
    </location>
    <ligand>
        <name>dimethylallyl diphosphate</name>
        <dbReference type="ChEBI" id="CHEBI:57623"/>
    </ligand>
</feature>
<feature type="binding site" evidence="3">
    <location>
        <position position="614"/>
    </location>
    <ligand>
        <name>dimethylallyl diphosphate</name>
        <dbReference type="ChEBI" id="CHEBI:57623"/>
    </ligand>
</feature>
<feature type="binding site" evidence="3">
    <location>
        <position position="624"/>
    </location>
    <ligand>
        <name>dimethylallyl diphosphate</name>
        <dbReference type="ChEBI" id="CHEBI:57623"/>
    </ligand>
</feature>
<evidence type="ECO:0000250" key="1">
    <source>
        <dbReference type="UniProtKB" id="A1C8C3"/>
    </source>
</evidence>
<evidence type="ECO:0000250" key="2">
    <source>
        <dbReference type="UniProtKB" id="A2PZA5"/>
    </source>
</evidence>
<evidence type="ECO:0000250" key="3">
    <source>
        <dbReference type="UniProtKB" id="Q12051"/>
    </source>
</evidence>
<evidence type="ECO:0000250" key="4">
    <source>
        <dbReference type="UniProtKB" id="Q40577"/>
    </source>
</evidence>
<evidence type="ECO:0000256" key="5">
    <source>
        <dbReference type="SAM" id="MobiDB-lite"/>
    </source>
</evidence>
<evidence type="ECO:0000269" key="6">
    <source>
    </source>
</evidence>
<evidence type="ECO:0000303" key="7">
    <source>
    </source>
</evidence>
<evidence type="ECO:0000305" key="8"/>
<evidence type="ECO:0000305" key="9">
    <source>
    </source>
</evidence>
<dbReference type="EC" id="4.2.3.145" evidence="6"/>
<dbReference type="EC" id="2.5.1.29" evidence="6"/>
<dbReference type="EC" id="2.5.1.81" evidence="6"/>
<dbReference type="EMBL" id="KB445570">
    <property type="protein sequence ID" value="EMD96232.1"/>
    <property type="molecule type" value="Genomic_DNA"/>
</dbReference>
<dbReference type="SMR" id="M2V8C1"/>
<dbReference type="STRING" id="701091.M2V8C1"/>
<dbReference type="eggNOG" id="KOG0777">
    <property type="taxonomic scope" value="Eukaryota"/>
</dbReference>
<dbReference type="HOGENOM" id="CLU_014015_10_0_1"/>
<dbReference type="OMA" id="DLYWTHN"/>
<dbReference type="OrthoDB" id="10300at28556"/>
<dbReference type="UniPathway" id="UPA00213"/>
<dbReference type="Proteomes" id="UP000016936">
    <property type="component" value="Unassembled WGS sequence"/>
</dbReference>
<dbReference type="GO" id="GO:0044687">
    <property type="term" value="F:geranylfarnesyl diphosphate synthase activity"/>
    <property type="evidence" value="ECO:0007669"/>
    <property type="project" value="UniProtKB-EC"/>
</dbReference>
<dbReference type="GO" id="GO:0004311">
    <property type="term" value="F:geranylgeranyl diphosphate synthase activity"/>
    <property type="evidence" value="ECO:0007669"/>
    <property type="project" value="UniProtKB-EC"/>
</dbReference>
<dbReference type="GO" id="GO:0016829">
    <property type="term" value="F:lyase activity"/>
    <property type="evidence" value="ECO:0007669"/>
    <property type="project" value="UniProtKB-KW"/>
</dbReference>
<dbReference type="GO" id="GO:0046872">
    <property type="term" value="F:metal ion binding"/>
    <property type="evidence" value="ECO:0007669"/>
    <property type="project" value="UniProtKB-KW"/>
</dbReference>
<dbReference type="GO" id="GO:0046165">
    <property type="term" value="P:alcohol biosynthetic process"/>
    <property type="evidence" value="ECO:0007669"/>
    <property type="project" value="UniProtKB-ARBA"/>
</dbReference>
<dbReference type="GO" id="GO:0043386">
    <property type="term" value="P:mycotoxin biosynthetic process"/>
    <property type="evidence" value="ECO:0007669"/>
    <property type="project" value="UniProtKB-ARBA"/>
</dbReference>
<dbReference type="GO" id="GO:0016114">
    <property type="term" value="P:terpenoid biosynthetic process"/>
    <property type="evidence" value="ECO:0007669"/>
    <property type="project" value="UniProtKB-UniPathway"/>
</dbReference>
<dbReference type="CDD" id="cd00685">
    <property type="entry name" value="Trans_IPPS_HT"/>
    <property type="match status" value="1"/>
</dbReference>
<dbReference type="Gene3D" id="1.10.600.10">
    <property type="entry name" value="Farnesyl Diphosphate Synthase"/>
    <property type="match status" value="2"/>
</dbReference>
<dbReference type="InterPro" id="IPR008949">
    <property type="entry name" value="Isoprenoid_synthase_dom_sf"/>
</dbReference>
<dbReference type="InterPro" id="IPR000092">
    <property type="entry name" value="Polyprenyl_synt"/>
</dbReference>
<dbReference type="InterPro" id="IPR033749">
    <property type="entry name" value="Polyprenyl_synt_CS"/>
</dbReference>
<dbReference type="PANTHER" id="PTHR12001">
    <property type="entry name" value="GERANYLGERANYL PYROPHOSPHATE SYNTHASE"/>
    <property type="match status" value="1"/>
</dbReference>
<dbReference type="PANTHER" id="PTHR12001:SF72">
    <property type="entry name" value="THIJ_PFPI FAMILY PROTEIN (AFU_ORTHOLOGUE AFUA_3G01210)-RELATED"/>
    <property type="match status" value="1"/>
</dbReference>
<dbReference type="Pfam" id="PF00348">
    <property type="entry name" value="polyprenyl_synt"/>
    <property type="match status" value="1"/>
</dbReference>
<dbReference type="Pfam" id="PF19086">
    <property type="entry name" value="Terpene_syn_C_2"/>
    <property type="match status" value="1"/>
</dbReference>
<dbReference type="SFLD" id="SFLDS00005">
    <property type="entry name" value="Isoprenoid_Synthase_Type_I"/>
    <property type="match status" value="1"/>
</dbReference>
<dbReference type="SUPFAM" id="SSF48576">
    <property type="entry name" value="Terpenoid synthases"/>
    <property type="match status" value="2"/>
</dbReference>
<dbReference type="PROSITE" id="PS00723">
    <property type="entry name" value="POLYPRENYL_SYNTHASE_1"/>
    <property type="match status" value="1"/>
</dbReference>
<dbReference type="PROSITE" id="PS00444">
    <property type="entry name" value="POLYPRENYL_SYNTHASE_2"/>
    <property type="match status" value="1"/>
</dbReference>
<gene>
    <name evidence="7" type="primary">oblA</name>
    <name type="ORF">COCHEDRAFT_1167261</name>
</gene>